<feature type="chain" id="PRO_0000272260" description="Putative F-box/LRR-repeat protein 21">
    <location>
        <begin position="1"/>
        <end position="304"/>
    </location>
</feature>
<feature type="domain" description="F-box" evidence="1">
    <location>
        <begin position="43"/>
        <end position="90"/>
    </location>
</feature>
<feature type="repeat" description="LRR 1">
    <location>
        <begin position="132"/>
        <end position="159"/>
    </location>
</feature>
<feature type="repeat" description="LRR 2">
    <location>
        <begin position="173"/>
        <end position="198"/>
    </location>
</feature>
<feature type="repeat" description="LRR 3">
    <location>
        <begin position="218"/>
        <end position="241"/>
    </location>
</feature>
<feature type="repeat" description="LRR 4">
    <location>
        <begin position="243"/>
        <end position="268"/>
    </location>
</feature>
<dbReference type="EMBL" id="AC012477">
    <property type="status" value="NOT_ANNOTATED_CDS"/>
    <property type="molecule type" value="Genomic_DNA"/>
</dbReference>
<dbReference type="EMBL" id="AL161503">
    <property type="protein sequence ID" value="CAB81089.1"/>
    <property type="molecule type" value="Genomic_DNA"/>
</dbReference>
<dbReference type="EMBL" id="CP002687">
    <property type="status" value="NOT_ANNOTATED_CDS"/>
    <property type="molecule type" value="Genomic_DNA"/>
</dbReference>
<dbReference type="PIR" id="G85068">
    <property type="entry name" value="G85068"/>
</dbReference>
<dbReference type="SMR" id="Q9M0U8"/>
<dbReference type="BioGRID" id="11208">
    <property type="interactions" value="1"/>
</dbReference>
<dbReference type="FunCoup" id="Q9M0U8">
    <property type="interactions" value="510"/>
</dbReference>
<dbReference type="STRING" id="3702.Q9M0U8"/>
<dbReference type="PaxDb" id="3702-AT4G05470.1"/>
<dbReference type="Araport" id="AT4G05470"/>
<dbReference type="TAIR" id="AT4G05470"/>
<dbReference type="eggNOG" id="KOG1947">
    <property type="taxonomic scope" value="Eukaryota"/>
</dbReference>
<dbReference type="HOGENOM" id="CLU_044915_0_0_1"/>
<dbReference type="InParanoid" id="Q9M0U8"/>
<dbReference type="PRO" id="PR:Q9M0U8"/>
<dbReference type="Proteomes" id="UP000006548">
    <property type="component" value="Chromosome 4"/>
</dbReference>
<dbReference type="ExpressionAtlas" id="Q9M0U8">
    <property type="expression patterns" value="baseline and differential"/>
</dbReference>
<dbReference type="GO" id="GO:1905761">
    <property type="term" value="F:SCF ubiquitin ligase complex binding"/>
    <property type="evidence" value="ECO:0000318"/>
    <property type="project" value="GO_Central"/>
</dbReference>
<dbReference type="CDD" id="cd22164">
    <property type="entry name" value="F-box_AtSKIP19-like"/>
    <property type="match status" value="1"/>
</dbReference>
<dbReference type="Gene3D" id="1.20.1280.50">
    <property type="match status" value="1"/>
</dbReference>
<dbReference type="Gene3D" id="3.80.10.10">
    <property type="entry name" value="Ribonuclease Inhibitor"/>
    <property type="match status" value="1"/>
</dbReference>
<dbReference type="InterPro" id="IPR036047">
    <property type="entry name" value="F-box-like_dom_sf"/>
</dbReference>
<dbReference type="InterPro" id="IPR001810">
    <property type="entry name" value="F-box_dom"/>
</dbReference>
<dbReference type="InterPro" id="IPR032675">
    <property type="entry name" value="LRR_dom_sf"/>
</dbReference>
<dbReference type="PANTHER" id="PTHR38926">
    <property type="entry name" value="F-BOX DOMAIN CONTAINING PROTEIN, EXPRESSED"/>
    <property type="match status" value="1"/>
</dbReference>
<dbReference type="PANTHER" id="PTHR38926:SF2">
    <property type="entry name" value="F-BOX_LRR-REPEAT PROTEIN 21-RELATED"/>
    <property type="match status" value="1"/>
</dbReference>
<dbReference type="Pfam" id="PF12937">
    <property type="entry name" value="F-box-like"/>
    <property type="match status" value="1"/>
</dbReference>
<dbReference type="SMART" id="SM00256">
    <property type="entry name" value="FBOX"/>
    <property type="match status" value="1"/>
</dbReference>
<dbReference type="SUPFAM" id="SSF81383">
    <property type="entry name" value="F-box domain"/>
    <property type="match status" value="1"/>
</dbReference>
<dbReference type="SUPFAM" id="SSF52047">
    <property type="entry name" value="RNI-like"/>
    <property type="match status" value="1"/>
</dbReference>
<dbReference type="PROSITE" id="PS50181">
    <property type="entry name" value="FBOX"/>
    <property type="match status" value="1"/>
</dbReference>
<reference key="1">
    <citation type="journal article" date="1999" name="Nature">
        <title>Sequence and analysis of chromosome 4 of the plant Arabidopsis thaliana.</title>
        <authorList>
            <person name="Mayer K.F.X."/>
            <person name="Schueller C."/>
            <person name="Wambutt R."/>
            <person name="Murphy G."/>
            <person name="Volckaert G."/>
            <person name="Pohl T."/>
            <person name="Duesterhoeft A."/>
            <person name="Stiekema W."/>
            <person name="Entian K.-D."/>
            <person name="Terryn N."/>
            <person name="Harris B."/>
            <person name="Ansorge W."/>
            <person name="Brandt P."/>
            <person name="Grivell L.A."/>
            <person name="Rieger M."/>
            <person name="Weichselgartner M."/>
            <person name="de Simone V."/>
            <person name="Obermaier B."/>
            <person name="Mache R."/>
            <person name="Mueller M."/>
            <person name="Kreis M."/>
            <person name="Delseny M."/>
            <person name="Puigdomenech P."/>
            <person name="Watson M."/>
            <person name="Schmidtheini T."/>
            <person name="Reichert B."/>
            <person name="Portetelle D."/>
            <person name="Perez-Alonso M."/>
            <person name="Boutry M."/>
            <person name="Bancroft I."/>
            <person name="Vos P."/>
            <person name="Hoheisel J."/>
            <person name="Zimmermann W."/>
            <person name="Wedler H."/>
            <person name="Ridley P."/>
            <person name="Langham S.-A."/>
            <person name="McCullagh B."/>
            <person name="Bilham L."/>
            <person name="Robben J."/>
            <person name="van der Schueren J."/>
            <person name="Grymonprez B."/>
            <person name="Chuang Y.-J."/>
            <person name="Vandenbussche F."/>
            <person name="Braeken M."/>
            <person name="Weltjens I."/>
            <person name="Voet M."/>
            <person name="Bastiaens I."/>
            <person name="Aert R."/>
            <person name="Defoor E."/>
            <person name="Weitzenegger T."/>
            <person name="Bothe G."/>
            <person name="Ramsperger U."/>
            <person name="Hilbert H."/>
            <person name="Braun M."/>
            <person name="Holzer E."/>
            <person name="Brandt A."/>
            <person name="Peters S."/>
            <person name="van Staveren M."/>
            <person name="Dirkse W."/>
            <person name="Mooijman P."/>
            <person name="Klein Lankhorst R."/>
            <person name="Rose M."/>
            <person name="Hauf J."/>
            <person name="Koetter P."/>
            <person name="Berneiser S."/>
            <person name="Hempel S."/>
            <person name="Feldpausch M."/>
            <person name="Lamberth S."/>
            <person name="Van den Daele H."/>
            <person name="De Keyser A."/>
            <person name="Buysshaert C."/>
            <person name="Gielen J."/>
            <person name="Villarroel R."/>
            <person name="De Clercq R."/>
            <person name="van Montagu M."/>
            <person name="Rogers J."/>
            <person name="Cronin A."/>
            <person name="Quail M.A."/>
            <person name="Bray-Allen S."/>
            <person name="Clark L."/>
            <person name="Doggett J."/>
            <person name="Hall S."/>
            <person name="Kay M."/>
            <person name="Lennard N."/>
            <person name="McLay K."/>
            <person name="Mayes R."/>
            <person name="Pettett A."/>
            <person name="Rajandream M.A."/>
            <person name="Lyne M."/>
            <person name="Benes V."/>
            <person name="Rechmann S."/>
            <person name="Borkova D."/>
            <person name="Bloecker H."/>
            <person name="Scharfe M."/>
            <person name="Grimm M."/>
            <person name="Loehnert T.-H."/>
            <person name="Dose S."/>
            <person name="de Haan M."/>
            <person name="Maarse A.C."/>
            <person name="Schaefer M."/>
            <person name="Mueller-Auer S."/>
            <person name="Gabel C."/>
            <person name="Fuchs M."/>
            <person name="Fartmann B."/>
            <person name="Granderath K."/>
            <person name="Dauner D."/>
            <person name="Herzl A."/>
            <person name="Neumann S."/>
            <person name="Argiriou A."/>
            <person name="Vitale D."/>
            <person name="Liguori R."/>
            <person name="Piravandi E."/>
            <person name="Massenet O."/>
            <person name="Quigley F."/>
            <person name="Clabauld G."/>
            <person name="Muendlein A."/>
            <person name="Felber R."/>
            <person name="Schnabl S."/>
            <person name="Hiller R."/>
            <person name="Schmidt W."/>
            <person name="Lecharny A."/>
            <person name="Aubourg S."/>
            <person name="Chefdor F."/>
            <person name="Cooke R."/>
            <person name="Berger C."/>
            <person name="Monfort A."/>
            <person name="Casacuberta E."/>
            <person name="Gibbons T."/>
            <person name="Weber N."/>
            <person name="Vandenbol M."/>
            <person name="Bargues M."/>
            <person name="Terol J."/>
            <person name="Torres A."/>
            <person name="Perez-Perez A."/>
            <person name="Purnelle B."/>
            <person name="Bent E."/>
            <person name="Johnson S."/>
            <person name="Tacon D."/>
            <person name="Jesse T."/>
            <person name="Heijnen L."/>
            <person name="Schwarz S."/>
            <person name="Scholler P."/>
            <person name="Heber S."/>
            <person name="Francs P."/>
            <person name="Bielke C."/>
            <person name="Frishman D."/>
            <person name="Haase D."/>
            <person name="Lemcke K."/>
            <person name="Mewes H.-W."/>
            <person name="Stocker S."/>
            <person name="Zaccaria P."/>
            <person name="Bevan M."/>
            <person name="Wilson R.K."/>
            <person name="de la Bastide M."/>
            <person name="Habermann K."/>
            <person name="Parnell L."/>
            <person name="Dedhia N."/>
            <person name="Gnoj L."/>
            <person name="Schutz K."/>
            <person name="Huang E."/>
            <person name="Spiegel L."/>
            <person name="Sekhon M."/>
            <person name="Murray J."/>
            <person name="Sheet P."/>
            <person name="Cordes M."/>
            <person name="Abu-Threideh J."/>
            <person name="Stoneking T."/>
            <person name="Kalicki J."/>
            <person name="Graves T."/>
            <person name="Harmon G."/>
            <person name="Edwards J."/>
            <person name="Latreille P."/>
            <person name="Courtney L."/>
            <person name="Cloud J."/>
            <person name="Abbott A."/>
            <person name="Scott K."/>
            <person name="Johnson D."/>
            <person name="Minx P."/>
            <person name="Bentley D."/>
            <person name="Fulton B."/>
            <person name="Miller N."/>
            <person name="Greco T."/>
            <person name="Kemp K."/>
            <person name="Kramer J."/>
            <person name="Fulton L."/>
            <person name="Mardis E."/>
            <person name="Dante M."/>
            <person name="Pepin K."/>
            <person name="Hillier L.W."/>
            <person name="Nelson J."/>
            <person name="Spieth J."/>
            <person name="Ryan E."/>
            <person name="Andrews S."/>
            <person name="Geisel C."/>
            <person name="Layman D."/>
            <person name="Du H."/>
            <person name="Ali J."/>
            <person name="Berghoff A."/>
            <person name="Jones K."/>
            <person name="Drone K."/>
            <person name="Cotton M."/>
            <person name="Joshu C."/>
            <person name="Antonoiu B."/>
            <person name="Zidanic M."/>
            <person name="Strong C."/>
            <person name="Sun H."/>
            <person name="Lamar B."/>
            <person name="Yordan C."/>
            <person name="Ma P."/>
            <person name="Zhong J."/>
            <person name="Preston R."/>
            <person name="Vil D."/>
            <person name="Shekher M."/>
            <person name="Matero A."/>
            <person name="Shah R."/>
            <person name="Swaby I.K."/>
            <person name="O'Shaughnessy A."/>
            <person name="Rodriguez M."/>
            <person name="Hoffman J."/>
            <person name="Till S."/>
            <person name="Granat S."/>
            <person name="Shohdy N."/>
            <person name="Hasegawa A."/>
            <person name="Hameed A."/>
            <person name="Lodhi M."/>
            <person name="Johnson A."/>
            <person name="Chen E."/>
            <person name="Marra M.A."/>
            <person name="Martienssen R."/>
            <person name="McCombie W.R."/>
        </authorList>
    </citation>
    <scope>NUCLEOTIDE SEQUENCE [LARGE SCALE GENOMIC DNA]</scope>
    <source>
        <strain>cv. Columbia</strain>
    </source>
</reference>
<reference key="2">
    <citation type="journal article" date="2017" name="Plant J.">
        <title>Araport11: a complete reannotation of the Arabidopsis thaliana reference genome.</title>
        <authorList>
            <person name="Cheng C.Y."/>
            <person name="Krishnakumar V."/>
            <person name="Chan A.P."/>
            <person name="Thibaud-Nissen F."/>
            <person name="Schobel S."/>
            <person name="Town C.D."/>
        </authorList>
    </citation>
    <scope>GENOME REANNOTATION</scope>
    <source>
        <strain>cv. Columbia</strain>
    </source>
</reference>
<reference key="3">
    <citation type="journal article" date="2000" name="Trends Plant Sci.">
        <title>F-box proteins in Arabidopsis.</title>
        <authorList>
            <person name="Xiao W."/>
            <person name="Jang J.-C."/>
        </authorList>
    </citation>
    <scope>GENE FAMILY</scope>
    <scope>NOMENCLATURE</scope>
</reference>
<name>FBL21_ARATH</name>
<keyword id="KW-0433">Leucine-rich repeat</keyword>
<keyword id="KW-1185">Reference proteome</keyword>
<keyword id="KW-0677">Repeat</keyword>
<organism>
    <name type="scientific">Arabidopsis thaliana</name>
    <name type="common">Mouse-ear cress</name>
    <dbReference type="NCBI Taxonomy" id="3702"/>
    <lineage>
        <taxon>Eukaryota</taxon>
        <taxon>Viridiplantae</taxon>
        <taxon>Streptophyta</taxon>
        <taxon>Embryophyta</taxon>
        <taxon>Tracheophyta</taxon>
        <taxon>Spermatophyta</taxon>
        <taxon>Magnoliopsida</taxon>
        <taxon>eudicotyledons</taxon>
        <taxon>Gunneridae</taxon>
        <taxon>Pentapetalae</taxon>
        <taxon>rosids</taxon>
        <taxon>malvids</taxon>
        <taxon>Brassicales</taxon>
        <taxon>Brassicaceae</taxon>
        <taxon>Camelineae</taxon>
        <taxon>Arabidopsis</taxon>
    </lineage>
</organism>
<accession>Q9M0U8</accession>
<sequence>MTASSKMTSSTTLLSLFMKEDEEGRNKKTTTSTTLESLLMKERRNWVDLPPELTTSILLRLSLTDILDNAQKVCKEWRRICKDPSMWRKINTRDCLMYNFDFVSMCRHIVDLSQGGLLEINVDEHFLSDSLLSYITDRNLRSLGLGMCFPRVTKLGVVNAIAKIPLLETLEVTHSCIKLDLKAIGHACPQLKTLKLNSLGRLWPASDKYDSNVLDDMGPLECDDDALAIAESMPKLHHLQLMANRLTNTGLNAILDGCPHLEHLDVRKCFRISLVGNLEKRCLEMIKELRRPGDSTADYPYNGV</sequence>
<protein>
    <recommendedName>
        <fullName>Putative F-box/LRR-repeat protein 21</fullName>
    </recommendedName>
</protein>
<evidence type="ECO:0000255" key="1">
    <source>
        <dbReference type="PROSITE-ProRule" id="PRU00080"/>
    </source>
</evidence>
<gene>
    <name type="primary">FBL21</name>
    <name type="ordered locus">At4g05470</name>
    <name type="ORF">C6L9</name>
</gene>
<proteinExistence type="predicted"/>